<comment type="function">
    <text evidence="1">Plays an essential role in the initiation and regulation of chromosomal replication. ATP-DnaA binds to the origin of replication (oriC) to initiate formation of the DNA replication initiation complex once per cell cycle. Binds the DnaA box (a 9 base pair repeat at the origin) and separates the double-stranded (ds)DNA. Forms a right-handed helical filament on oriC DNA; dsDNA binds to the exterior of the filament while single-stranded (ss)DNA is stabiized in the filament's interior. The ATP-DnaA-oriC complex binds and stabilizes one strand of the AT-rich DNA unwinding element (DUE), permitting loading of DNA polymerase. After initiation quickly degrades to an ADP-DnaA complex that is not apt for DNA replication. Binds acidic phospholipids.</text>
</comment>
<comment type="subunit">
    <text evidence="1">Oligomerizes as a right-handed, spiral filament on DNA at oriC.</text>
</comment>
<comment type="subcellular location">
    <subcellularLocation>
        <location evidence="1">Cytoplasm</location>
    </subcellularLocation>
</comment>
<comment type="domain">
    <text evidence="1">Domain I is involved in oligomerization and binding regulators, domain II is flexibile and of varying length in different bacteria, domain III forms the AAA+ region, while domain IV binds dsDNA.</text>
</comment>
<comment type="similarity">
    <text evidence="1">Belongs to the DnaA family.</text>
</comment>
<protein>
    <recommendedName>
        <fullName evidence="1">Chromosomal replication initiator protein DnaA</fullName>
    </recommendedName>
</protein>
<evidence type="ECO:0000255" key="1">
    <source>
        <dbReference type="HAMAP-Rule" id="MF_00377"/>
    </source>
</evidence>
<accession>Q8XPG2</accession>
<organism>
    <name type="scientific">Clostridium perfringens (strain 13 / Type A)</name>
    <dbReference type="NCBI Taxonomy" id="195102"/>
    <lineage>
        <taxon>Bacteria</taxon>
        <taxon>Bacillati</taxon>
        <taxon>Bacillota</taxon>
        <taxon>Clostridia</taxon>
        <taxon>Eubacteriales</taxon>
        <taxon>Clostridiaceae</taxon>
        <taxon>Clostridium</taxon>
    </lineage>
</organism>
<keyword id="KW-0067">ATP-binding</keyword>
<keyword id="KW-0963">Cytoplasm</keyword>
<keyword id="KW-0235">DNA replication</keyword>
<keyword id="KW-0238">DNA-binding</keyword>
<keyword id="KW-0446">Lipid-binding</keyword>
<keyword id="KW-0547">Nucleotide-binding</keyword>
<keyword id="KW-1185">Reference proteome</keyword>
<reference key="1">
    <citation type="journal article" date="2002" name="Proc. Natl. Acad. Sci. U.S.A.">
        <title>Complete genome sequence of Clostridium perfringens, an anaerobic flesh-eater.</title>
        <authorList>
            <person name="Shimizu T."/>
            <person name="Ohtani K."/>
            <person name="Hirakawa H."/>
            <person name="Ohshima K."/>
            <person name="Yamashita A."/>
            <person name="Shiba T."/>
            <person name="Ogasawara N."/>
            <person name="Hattori M."/>
            <person name="Kuhara S."/>
            <person name="Hayashi H."/>
        </authorList>
    </citation>
    <scope>NUCLEOTIDE SEQUENCE [LARGE SCALE GENOMIC DNA]</scope>
    <source>
        <strain>13 / Type A</strain>
    </source>
</reference>
<sequence>MDAQLNNLWEQALNIIKGEISEISFNTWIKSCTPISISDNILKLSVPNEFTKGILDTRYKDLLIQALKIVTSRKFKIEFYLESDLEEEKENEEKQKEEKKENTNDVDGSIVVSDEMSATLNPKYTFQSFVIGNSNRFAHAASLAVAESPAKAYNPLFIYGGVGLGKTHLMHAIGHYILQENPKAKVVYVSSEKFTNELINAIKDDKNEEFRNKYRKVDVLLIDDIQFIAGKERTQEEFFHTFNALHEENKQIILSSDRPPKEIPTLEDRLRSRFEWGLIADIQPPDFETRMAILKKKADVEGLNVPNEVMVYIATKIKSNIRELEGALIRIIAYSSLTNRDVSVDLASEALKDIISNKESAPVTVKTIQESVANYYNLRIEDLKSQRRTRNIAYPRQIAMYLSRKLTDMSLPKIGEEFGGRDHTTVIHAYEKISENLKTDEGLQSMINDITKKLTQK</sequence>
<dbReference type="EMBL" id="BA000016">
    <property type="protein sequence ID" value="BAB79707.1"/>
    <property type="molecule type" value="Genomic_DNA"/>
</dbReference>
<dbReference type="RefSeq" id="WP_003451025.1">
    <property type="nucleotide sequence ID" value="NC_003366.1"/>
</dbReference>
<dbReference type="SMR" id="Q8XPG2"/>
<dbReference type="STRING" id="195102.gene:10489220"/>
<dbReference type="GeneID" id="93000724"/>
<dbReference type="KEGG" id="cpe:CPE0001"/>
<dbReference type="HOGENOM" id="CLU_026910_3_1_9"/>
<dbReference type="Proteomes" id="UP000000818">
    <property type="component" value="Chromosome"/>
</dbReference>
<dbReference type="GO" id="GO:0005737">
    <property type="term" value="C:cytoplasm"/>
    <property type="evidence" value="ECO:0007669"/>
    <property type="project" value="UniProtKB-SubCell"/>
</dbReference>
<dbReference type="GO" id="GO:0005886">
    <property type="term" value="C:plasma membrane"/>
    <property type="evidence" value="ECO:0007669"/>
    <property type="project" value="TreeGrafter"/>
</dbReference>
<dbReference type="GO" id="GO:0005524">
    <property type="term" value="F:ATP binding"/>
    <property type="evidence" value="ECO:0007669"/>
    <property type="project" value="UniProtKB-UniRule"/>
</dbReference>
<dbReference type="GO" id="GO:0016887">
    <property type="term" value="F:ATP hydrolysis activity"/>
    <property type="evidence" value="ECO:0007669"/>
    <property type="project" value="InterPro"/>
</dbReference>
<dbReference type="GO" id="GO:0003688">
    <property type="term" value="F:DNA replication origin binding"/>
    <property type="evidence" value="ECO:0007669"/>
    <property type="project" value="UniProtKB-UniRule"/>
</dbReference>
<dbReference type="GO" id="GO:0008289">
    <property type="term" value="F:lipid binding"/>
    <property type="evidence" value="ECO:0007669"/>
    <property type="project" value="UniProtKB-KW"/>
</dbReference>
<dbReference type="GO" id="GO:0006270">
    <property type="term" value="P:DNA replication initiation"/>
    <property type="evidence" value="ECO:0007669"/>
    <property type="project" value="UniProtKB-UniRule"/>
</dbReference>
<dbReference type="GO" id="GO:0006275">
    <property type="term" value="P:regulation of DNA replication"/>
    <property type="evidence" value="ECO:0007669"/>
    <property type="project" value="UniProtKB-UniRule"/>
</dbReference>
<dbReference type="CDD" id="cd00009">
    <property type="entry name" value="AAA"/>
    <property type="match status" value="1"/>
</dbReference>
<dbReference type="CDD" id="cd06571">
    <property type="entry name" value="Bac_DnaA_C"/>
    <property type="match status" value="1"/>
</dbReference>
<dbReference type="FunFam" id="1.10.1750.10:FF:000003">
    <property type="entry name" value="Chromosomal replication initiator protein DnaA"/>
    <property type="match status" value="1"/>
</dbReference>
<dbReference type="FunFam" id="1.10.8.60:FF:000003">
    <property type="entry name" value="Chromosomal replication initiator protein DnaA"/>
    <property type="match status" value="1"/>
</dbReference>
<dbReference type="FunFam" id="3.40.50.300:FF:000150">
    <property type="entry name" value="Chromosomal replication initiator protein DnaA"/>
    <property type="match status" value="1"/>
</dbReference>
<dbReference type="Gene3D" id="1.10.1750.10">
    <property type="match status" value="1"/>
</dbReference>
<dbReference type="Gene3D" id="1.10.8.60">
    <property type="match status" value="1"/>
</dbReference>
<dbReference type="Gene3D" id="3.30.300.180">
    <property type="match status" value="1"/>
</dbReference>
<dbReference type="Gene3D" id="3.40.50.300">
    <property type="entry name" value="P-loop containing nucleotide triphosphate hydrolases"/>
    <property type="match status" value="1"/>
</dbReference>
<dbReference type="HAMAP" id="MF_00377">
    <property type="entry name" value="DnaA_bact"/>
    <property type="match status" value="1"/>
</dbReference>
<dbReference type="InterPro" id="IPR003593">
    <property type="entry name" value="AAA+_ATPase"/>
</dbReference>
<dbReference type="InterPro" id="IPR001957">
    <property type="entry name" value="Chromosome_initiator_DnaA"/>
</dbReference>
<dbReference type="InterPro" id="IPR020591">
    <property type="entry name" value="Chromosome_initiator_DnaA-like"/>
</dbReference>
<dbReference type="InterPro" id="IPR018312">
    <property type="entry name" value="Chromosome_initiator_DnaA_CS"/>
</dbReference>
<dbReference type="InterPro" id="IPR013159">
    <property type="entry name" value="DnaA_C"/>
</dbReference>
<dbReference type="InterPro" id="IPR013317">
    <property type="entry name" value="DnaA_dom"/>
</dbReference>
<dbReference type="InterPro" id="IPR024633">
    <property type="entry name" value="DnaA_N_dom"/>
</dbReference>
<dbReference type="InterPro" id="IPR038454">
    <property type="entry name" value="DnaA_N_sf"/>
</dbReference>
<dbReference type="InterPro" id="IPR027417">
    <property type="entry name" value="P-loop_NTPase"/>
</dbReference>
<dbReference type="InterPro" id="IPR010921">
    <property type="entry name" value="Trp_repressor/repl_initiator"/>
</dbReference>
<dbReference type="NCBIfam" id="TIGR00362">
    <property type="entry name" value="DnaA"/>
    <property type="match status" value="1"/>
</dbReference>
<dbReference type="NCBIfam" id="NF010686">
    <property type="entry name" value="PRK14086.1"/>
    <property type="match status" value="1"/>
</dbReference>
<dbReference type="PANTHER" id="PTHR30050">
    <property type="entry name" value="CHROMOSOMAL REPLICATION INITIATOR PROTEIN DNAA"/>
    <property type="match status" value="1"/>
</dbReference>
<dbReference type="PANTHER" id="PTHR30050:SF2">
    <property type="entry name" value="CHROMOSOMAL REPLICATION INITIATOR PROTEIN DNAA"/>
    <property type="match status" value="1"/>
</dbReference>
<dbReference type="Pfam" id="PF00308">
    <property type="entry name" value="Bac_DnaA"/>
    <property type="match status" value="1"/>
</dbReference>
<dbReference type="Pfam" id="PF08299">
    <property type="entry name" value="Bac_DnaA_C"/>
    <property type="match status" value="1"/>
</dbReference>
<dbReference type="Pfam" id="PF11638">
    <property type="entry name" value="DnaA_N"/>
    <property type="match status" value="1"/>
</dbReference>
<dbReference type="PRINTS" id="PR00051">
    <property type="entry name" value="DNAA"/>
</dbReference>
<dbReference type="SMART" id="SM00382">
    <property type="entry name" value="AAA"/>
    <property type="match status" value="1"/>
</dbReference>
<dbReference type="SMART" id="SM00760">
    <property type="entry name" value="Bac_DnaA_C"/>
    <property type="match status" value="1"/>
</dbReference>
<dbReference type="SUPFAM" id="SSF52540">
    <property type="entry name" value="P-loop containing nucleoside triphosphate hydrolases"/>
    <property type="match status" value="1"/>
</dbReference>
<dbReference type="SUPFAM" id="SSF48295">
    <property type="entry name" value="TrpR-like"/>
    <property type="match status" value="1"/>
</dbReference>
<dbReference type="PROSITE" id="PS01008">
    <property type="entry name" value="DNAA"/>
    <property type="match status" value="1"/>
</dbReference>
<feature type="chain" id="PRO_0000114166" description="Chromosomal replication initiator protein DnaA">
    <location>
        <begin position="1"/>
        <end position="457"/>
    </location>
</feature>
<feature type="region of interest" description="Domain I, interacts with DnaA modulators" evidence="1">
    <location>
        <begin position="1"/>
        <end position="75"/>
    </location>
</feature>
<feature type="region of interest" description="Domain II" evidence="1">
    <location>
        <begin position="75"/>
        <end position="118"/>
    </location>
</feature>
<feature type="region of interest" description="Domain III, AAA+ region" evidence="1">
    <location>
        <begin position="119"/>
        <end position="335"/>
    </location>
</feature>
<feature type="region of interest" description="Domain IV, binds dsDNA" evidence="1">
    <location>
        <begin position="336"/>
        <end position="457"/>
    </location>
</feature>
<feature type="binding site" evidence="1">
    <location>
        <position position="163"/>
    </location>
    <ligand>
        <name>ATP</name>
        <dbReference type="ChEBI" id="CHEBI:30616"/>
    </ligand>
</feature>
<feature type="binding site" evidence="1">
    <location>
        <position position="165"/>
    </location>
    <ligand>
        <name>ATP</name>
        <dbReference type="ChEBI" id="CHEBI:30616"/>
    </ligand>
</feature>
<feature type="binding site" evidence="1">
    <location>
        <position position="166"/>
    </location>
    <ligand>
        <name>ATP</name>
        <dbReference type="ChEBI" id="CHEBI:30616"/>
    </ligand>
</feature>
<feature type="binding site" evidence="1">
    <location>
        <position position="167"/>
    </location>
    <ligand>
        <name>ATP</name>
        <dbReference type="ChEBI" id="CHEBI:30616"/>
    </ligand>
</feature>
<name>DNAA_CLOPE</name>
<proteinExistence type="inferred from homology"/>
<gene>
    <name evidence="1" type="primary">dnaA</name>
    <name type="ordered locus">CPE0001</name>
</gene>